<proteinExistence type="inferred from homology"/>
<sequence>MIIYDSILKQKVEFKPIREYEANIYVCGPTVYDDAHLGHAKSSISFDLLRRTLKSLGYKVKFIKNFTDIDDKILKKMSQTGKSLEDITNHYISRYKADMYALNVADADIEPKATTSLTSIINYITTLFENGWAYKIDDGIYFDTSKDDKYLSLSGRKDENLIARVASKDEKKDEKDFVLWKFDENWYDSPFGRGRPGWHSECVAMIKDHFCGSCEFEIDIHAGGADLLFPHHENEAAQCRCAYNKNLAKYWMHNGFVQVNNEKMSKSLGNSFFIKDALELVPGEALRFYLMSSHYRANFNYDIDDLKSSKKRLDKIYRLKKRLIGVKTSKTDAKFKKDILDAMSDDLNISVALAILDEMVNNANAKLDNEPKNRDFKQILVSNLEFVKELLGILYIDEFKWFQWGVDDSLKQEISVLIDQRNMAKKDKNFILADQIRDKLTNMDISIMDTPNGTMWEKV</sequence>
<feature type="chain" id="PRO_1000006577" description="Cysteine--tRNA ligase">
    <location>
        <begin position="1"/>
        <end position="459"/>
    </location>
</feature>
<feature type="short sequence motif" description="'HIGH' region">
    <location>
        <begin position="29"/>
        <end position="39"/>
    </location>
</feature>
<feature type="short sequence motif" description="'KMSKS' region">
    <location>
        <begin position="263"/>
        <end position="267"/>
    </location>
</feature>
<feature type="binding site" evidence="1">
    <location>
        <position position="27"/>
    </location>
    <ligand>
        <name>Zn(2+)</name>
        <dbReference type="ChEBI" id="CHEBI:29105"/>
    </ligand>
</feature>
<feature type="binding site" evidence="1">
    <location>
        <position position="202"/>
    </location>
    <ligand>
        <name>Zn(2+)</name>
        <dbReference type="ChEBI" id="CHEBI:29105"/>
    </ligand>
</feature>
<feature type="binding site" evidence="1">
    <location>
        <position position="231"/>
    </location>
    <ligand>
        <name>Zn(2+)</name>
        <dbReference type="ChEBI" id="CHEBI:29105"/>
    </ligand>
</feature>
<feature type="binding site" evidence="1">
    <location>
        <position position="235"/>
    </location>
    <ligand>
        <name>Zn(2+)</name>
        <dbReference type="ChEBI" id="CHEBI:29105"/>
    </ligand>
</feature>
<feature type="binding site" evidence="1">
    <location>
        <position position="266"/>
    </location>
    <ligand>
        <name>ATP</name>
        <dbReference type="ChEBI" id="CHEBI:30616"/>
    </ligand>
</feature>
<evidence type="ECO:0000255" key="1">
    <source>
        <dbReference type="HAMAP-Rule" id="MF_00041"/>
    </source>
</evidence>
<protein>
    <recommendedName>
        <fullName evidence="1">Cysteine--tRNA ligase</fullName>
        <ecNumber evidence="1">6.1.1.16</ecNumber>
    </recommendedName>
    <alternativeName>
        <fullName evidence="1">Cysteinyl-tRNA synthetase</fullName>
        <shortName evidence="1">CysRS</shortName>
    </alternativeName>
</protein>
<reference key="1">
    <citation type="submission" date="2006-11" db="EMBL/GenBank/DDBJ databases">
        <title>Sequence of Campylobacter fetus subsp. fetus 82-40.</title>
        <authorList>
            <person name="Fouts D.E."/>
            <person name="Nelson K.E."/>
        </authorList>
    </citation>
    <scope>NUCLEOTIDE SEQUENCE [LARGE SCALE GENOMIC DNA]</scope>
    <source>
        <strain>82-40</strain>
    </source>
</reference>
<accession>A0RP30</accession>
<dbReference type="EC" id="6.1.1.16" evidence="1"/>
<dbReference type="EMBL" id="CP000487">
    <property type="protein sequence ID" value="ABK82933.1"/>
    <property type="molecule type" value="Genomic_DNA"/>
</dbReference>
<dbReference type="RefSeq" id="WP_011731956.1">
    <property type="nucleotide sequence ID" value="NC_008599.1"/>
</dbReference>
<dbReference type="SMR" id="A0RP30"/>
<dbReference type="GeneID" id="61064626"/>
<dbReference type="KEGG" id="cff:CFF8240_0788"/>
<dbReference type="PATRIC" id="fig|360106.6.peg.762"/>
<dbReference type="eggNOG" id="COG0215">
    <property type="taxonomic scope" value="Bacteria"/>
</dbReference>
<dbReference type="HOGENOM" id="CLU_013528_0_1_7"/>
<dbReference type="Proteomes" id="UP000000760">
    <property type="component" value="Chromosome"/>
</dbReference>
<dbReference type="GO" id="GO:0005829">
    <property type="term" value="C:cytosol"/>
    <property type="evidence" value="ECO:0007669"/>
    <property type="project" value="TreeGrafter"/>
</dbReference>
<dbReference type="GO" id="GO:0005524">
    <property type="term" value="F:ATP binding"/>
    <property type="evidence" value="ECO:0007669"/>
    <property type="project" value="UniProtKB-UniRule"/>
</dbReference>
<dbReference type="GO" id="GO:0004817">
    <property type="term" value="F:cysteine-tRNA ligase activity"/>
    <property type="evidence" value="ECO:0007669"/>
    <property type="project" value="UniProtKB-UniRule"/>
</dbReference>
<dbReference type="GO" id="GO:0008270">
    <property type="term" value="F:zinc ion binding"/>
    <property type="evidence" value="ECO:0007669"/>
    <property type="project" value="UniProtKB-UniRule"/>
</dbReference>
<dbReference type="GO" id="GO:0006423">
    <property type="term" value="P:cysteinyl-tRNA aminoacylation"/>
    <property type="evidence" value="ECO:0007669"/>
    <property type="project" value="UniProtKB-UniRule"/>
</dbReference>
<dbReference type="CDD" id="cd00672">
    <property type="entry name" value="CysRS_core"/>
    <property type="match status" value="1"/>
</dbReference>
<dbReference type="Gene3D" id="1.20.120.1910">
    <property type="entry name" value="Cysteine-tRNA ligase, C-terminal anti-codon recognition domain"/>
    <property type="match status" value="1"/>
</dbReference>
<dbReference type="Gene3D" id="3.40.50.620">
    <property type="entry name" value="HUPs"/>
    <property type="match status" value="1"/>
</dbReference>
<dbReference type="HAMAP" id="MF_00041">
    <property type="entry name" value="Cys_tRNA_synth"/>
    <property type="match status" value="1"/>
</dbReference>
<dbReference type="InterPro" id="IPR015803">
    <property type="entry name" value="Cys-tRNA-ligase"/>
</dbReference>
<dbReference type="InterPro" id="IPR015273">
    <property type="entry name" value="Cys-tRNA-synt_Ia_DALR"/>
</dbReference>
<dbReference type="InterPro" id="IPR024909">
    <property type="entry name" value="Cys-tRNA/MSH_ligase"/>
</dbReference>
<dbReference type="InterPro" id="IPR014729">
    <property type="entry name" value="Rossmann-like_a/b/a_fold"/>
</dbReference>
<dbReference type="InterPro" id="IPR032678">
    <property type="entry name" value="tRNA-synt_1_cat_dom"/>
</dbReference>
<dbReference type="InterPro" id="IPR009080">
    <property type="entry name" value="tRNAsynth_Ia_anticodon-bd"/>
</dbReference>
<dbReference type="NCBIfam" id="TIGR00435">
    <property type="entry name" value="cysS"/>
    <property type="match status" value="1"/>
</dbReference>
<dbReference type="PANTHER" id="PTHR10890:SF3">
    <property type="entry name" value="CYSTEINE--TRNA LIGASE, CYTOPLASMIC"/>
    <property type="match status" value="1"/>
</dbReference>
<dbReference type="PANTHER" id="PTHR10890">
    <property type="entry name" value="CYSTEINYL-TRNA SYNTHETASE"/>
    <property type="match status" value="1"/>
</dbReference>
<dbReference type="Pfam" id="PF09190">
    <property type="entry name" value="DALR_2"/>
    <property type="match status" value="1"/>
</dbReference>
<dbReference type="Pfam" id="PF01406">
    <property type="entry name" value="tRNA-synt_1e"/>
    <property type="match status" value="1"/>
</dbReference>
<dbReference type="PRINTS" id="PR00983">
    <property type="entry name" value="TRNASYNTHCYS"/>
</dbReference>
<dbReference type="SMART" id="SM00840">
    <property type="entry name" value="DALR_2"/>
    <property type="match status" value="1"/>
</dbReference>
<dbReference type="SUPFAM" id="SSF47323">
    <property type="entry name" value="Anticodon-binding domain of a subclass of class I aminoacyl-tRNA synthetases"/>
    <property type="match status" value="1"/>
</dbReference>
<dbReference type="SUPFAM" id="SSF52374">
    <property type="entry name" value="Nucleotidylyl transferase"/>
    <property type="match status" value="1"/>
</dbReference>
<name>SYC_CAMFF</name>
<keyword id="KW-0030">Aminoacyl-tRNA synthetase</keyword>
<keyword id="KW-0067">ATP-binding</keyword>
<keyword id="KW-0963">Cytoplasm</keyword>
<keyword id="KW-0436">Ligase</keyword>
<keyword id="KW-0479">Metal-binding</keyword>
<keyword id="KW-0547">Nucleotide-binding</keyword>
<keyword id="KW-0648">Protein biosynthesis</keyword>
<keyword id="KW-0862">Zinc</keyword>
<organism>
    <name type="scientific">Campylobacter fetus subsp. fetus (strain 82-40)</name>
    <dbReference type="NCBI Taxonomy" id="360106"/>
    <lineage>
        <taxon>Bacteria</taxon>
        <taxon>Pseudomonadati</taxon>
        <taxon>Campylobacterota</taxon>
        <taxon>Epsilonproteobacteria</taxon>
        <taxon>Campylobacterales</taxon>
        <taxon>Campylobacteraceae</taxon>
        <taxon>Campylobacter</taxon>
    </lineage>
</organism>
<gene>
    <name evidence="1" type="primary">cysS</name>
    <name type="ordered locus">CFF8240_0788</name>
</gene>
<comment type="catalytic activity">
    <reaction evidence="1">
        <text>tRNA(Cys) + L-cysteine + ATP = L-cysteinyl-tRNA(Cys) + AMP + diphosphate</text>
        <dbReference type="Rhea" id="RHEA:17773"/>
        <dbReference type="Rhea" id="RHEA-COMP:9661"/>
        <dbReference type="Rhea" id="RHEA-COMP:9679"/>
        <dbReference type="ChEBI" id="CHEBI:30616"/>
        <dbReference type="ChEBI" id="CHEBI:33019"/>
        <dbReference type="ChEBI" id="CHEBI:35235"/>
        <dbReference type="ChEBI" id="CHEBI:78442"/>
        <dbReference type="ChEBI" id="CHEBI:78517"/>
        <dbReference type="ChEBI" id="CHEBI:456215"/>
        <dbReference type="EC" id="6.1.1.16"/>
    </reaction>
</comment>
<comment type="cofactor">
    <cofactor evidence="1">
        <name>Zn(2+)</name>
        <dbReference type="ChEBI" id="CHEBI:29105"/>
    </cofactor>
    <text evidence="1">Binds 1 zinc ion per subunit.</text>
</comment>
<comment type="subunit">
    <text evidence="1">Monomer.</text>
</comment>
<comment type="subcellular location">
    <subcellularLocation>
        <location evidence="1">Cytoplasm</location>
    </subcellularLocation>
</comment>
<comment type="similarity">
    <text evidence="1">Belongs to the class-I aminoacyl-tRNA synthetase family.</text>
</comment>